<dbReference type="EC" id="2.7.7.6" evidence="1"/>
<dbReference type="EMBL" id="AY167139">
    <property type="protein sequence ID" value="AAO00729.1"/>
    <property type="molecule type" value="Genomic_DNA"/>
</dbReference>
<dbReference type="SMR" id="Q8GCR5"/>
<dbReference type="GO" id="GO:0000428">
    <property type="term" value="C:DNA-directed RNA polymerase complex"/>
    <property type="evidence" value="ECO:0007669"/>
    <property type="project" value="UniProtKB-KW"/>
</dbReference>
<dbReference type="GO" id="GO:0003677">
    <property type="term" value="F:DNA binding"/>
    <property type="evidence" value="ECO:0007669"/>
    <property type="project" value="UniProtKB-UniRule"/>
</dbReference>
<dbReference type="GO" id="GO:0003899">
    <property type="term" value="F:DNA-directed RNA polymerase activity"/>
    <property type="evidence" value="ECO:0007669"/>
    <property type="project" value="UniProtKB-UniRule"/>
</dbReference>
<dbReference type="GO" id="GO:0032549">
    <property type="term" value="F:ribonucleoside binding"/>
    <property type="evidence" value="ECO:0007669"/>
    <property type="project" value="InterPro"/>
</dbReference>
<dbReference type="GO" id="GO:0006351">
    <property type="term" value="P:DNA-templated transcription"/>
    <property type="evidence" value="ECO:0007669"/>
    <property type="project" value="UniProtKB-UniRule"/>
</dbReference>
<dbReference type="CDD" id="cd00653">
    <property type="entry name" value="RNA_pol_B_RPB2"/>
    <property type="match status" value="1"/>
</dbReference>
<dbReference type="FunFam" id="3.90.1800.10:FF:000001">
    <property type="entry name" value="DNA-directed RNA polymerase subunit beta"/>
    <property type="match status" value="1"/>
</dbReference>
<dbReference type="Gene3D" id="2.40.50.100">
    <property type="match status" value="1"/>
</dbReference>
<dbReference type="Gene3D" id="2.40.50.150">
    <property type="match status" value="1"/>
</dbReference>
<dbReference type="Gene3D" id="3.90.1100.10">
    <property type="match status" value="2"/>
</dbReference>
<dbReference type="Gene3D" id="2.30.150.10">
    <property type="entry name" value="DNA-directed RNA polymerase, beta subunit, external 1 domain"/>
    <property type="match status" value="1"/>
</dbReference>
<dbReference type="Gene3D" id="2.40.270.10">
    <property type="entry name" value="DNA-directed RNA polymerase, subunit 2, domain 6"/>
    <property type="match status" value="1"/>
</dbReference>
<dbReference type="Gene3D" id="3.90.1800.10">
    <property type="entry name" value="RNA polymerase alpha subunit dimerisation domain"/>
    <property type="match status" value="1"/>
</dbReference>
<dbReference type="Gene3D" id="3.90.1110.10">
    <property type="entry name" value="RNA polymerase Rpb2, domain 2"/>
    <property type="match status" value="1"/>
</dbReference>
<dbReference type="HAMAP" id="MF_01321">
    <property type="entry name" value="RNApol_bact_RpoB"/>
    <property type="match status" value="1"/>
</dbReference>
<dbReference type="InterPro" id="IPR042107">
    <property type="entry name" value="DNA-dir_RNA_pol_bsu_ext_1_sf"/>
</dbReference>
<dbReference type="InterPro" id="IPR019462">
    <property type="entry name" value="DNA-dir_RNA_pol_bsu_external_1"/>
</dbReference>
<dbReference type="InterPro" id="IPR015712">
    <property type="entry name" value="DNA-dir_RNA_pol_su2"/>
</dbReference>
<dbReference type="InterPro" id="IPR007120">
    <property type="entry name" value="DNA-dir_RNAP_su2_dom"/>
</dbReference>
<dbReference type="InterPro" id="IPR037033">
    <property type="entry name" value="DNA-dir_RNAP_su2_hyb_sf"/>
</dbReference>
<dbReference type="InterPro" id="IPR010243">
    <property type="entry name" value="RNA_pol_bsu_bac"/>
</dbReference>
<dbReference type="InterPro" id="IPR007121">
    <property type="entry name" value="RNA_pol_bsu_CS"/>
</dbReference>
<dbReference type="InterPro" id="IPR007644">
    <property type="entry name" value="RNA_pol_bsu_protrusion"/>
</dbReference>
<dbReference type="InterPro" id="IPR007642">
    <property type="entry name" value="RNA_pol_Rpb2_2"/>
</dbReference>
<dbReference type="InterPro" id="IPR037034">
    <property type="entry name" value="RNA_pol_Rpb2_2_sf"/>
</dbReference>
<dbReference type="InterPro" id="IPR007645">
    <property type="entry name" value="RNA_pol_Rpb2_3"/>
</dbReference>
<dbReference type="InterPro" id="IPR007641">
    <property type="entry name" value="RNA_pol_Rpb2_7"/>
</dbReference>
<dbReference type="InterPro" id="IPR014724">
    <property type="entry name" value="RNA_pol_RPB2_OB-fold"/>
</dbReference>
<dbReference type="NCBIfam" id="NF001616">
    <property type="entry name" value="PRK00405.1"/>
    <property type="match status" value="1"/>
</dbReference>
<dbReference type="NCBIfam" id="TIGR02013">
    <property type="entry name" value="rpoB"/>
    <property type="match status" value="1"/>
</dbReference>
<dbReference type="PANTHER" id="PTHR20856">
    <property type="entry name" value="DNA-DIRECTED RNA POLYMERASE I SUBUNIT 2"/>
    <property type="match status" value="1"/>
</dbReference>
<dbReference type="Pfam" id="PF04563">
    <property type="entry name" value="RNA_pol_Rpb2_1"/>
    <property type="match status" value="1"/>
</dbReference>
<dbReference type="Pfam" id="PF04561">
    <property type="entry name" value="RNA_pol_Rpb2_2"/>
    <property type="match status" value="2"/>
</dbReference>
<dbReference type="Pfam" id="PF04565">
    <property type="entry name" value="RNA_pol_Rpb2_3"/>
    <property type="match status" value="1"/>
</dbReference>
<dbReference type="Pfam" id="PF10385">
    <property type="entry name" value="RNA_pol_Rpb2_45"/>
    <property type="match status" value="1"/>
</dbReference>
<dbReference type="Pfam" id="PF00562">
    <property type="entry name" value="RNA_pol_Rpb2_6"/>
    <property type="match status" value="1"/>
</dbReference>
<dbReference type="Pfam" id="PF04560">
    <property type="entry name" value="RNA_pol_Rpb2_7"/>
    <property type="match status" value="1"/>
</dbReference>
<dbReference type="SUPFAM" id="SSF64484">
    <property type="entry name" value="beta and beta-prime subunits of DNA dependent RNA-polymerase"/>
    <property type="match status" value="1"/>
</dbReference>
<dbReference type="PROSITE" id="PS01166">
    <property type="entry name" value="RNA_POL_BETA"/>
    <property type="match status" value="1"/>
</dbReference>
<gene>
    <name evidence="1" type="primary">rpoB</name>
</gene>
<organism>
    <name type="scientific">Enterococcus faecium</name>
    <name type="common">Streptococcus faecium</name>
    <dbReference type="NCBI Taxonomy" id="1352"/>
    <lineage>
        <taxon>Bacteria</taxon>
        <taxon>Bacillati</taxon>
        <taxon>Bacillota</taxon>
        <taxon>Bacilli</taxon>
        <taxon>Lactobacillales</taxon>
        <taxon>Enterococcaceae</taxon>
        <taxon>Enterococcus</taxon>
    </lineage>
</organism>
<feature type="chain" id="PRO_0000047901" description="DNA-directed RNA polymerase subunit beta">
    <location>
        <begin position="1"/>
        <end position="1208"/>
    </location>
</feature>
<proteinExistence type="inferred from homology"/>
<protein>
    <recommendedName>
        <fullName evidence="1">DNA-directed RNA polymerase subunit beta</fullName>
        <shortName evidence="1">RNAP subunit beta</shortName>
        <ecNumber evidence="1">2.7.7.6</ecNumber>
    </recommendedName>
    <alternativeName>
        <fullName evidence="1">RNA polymerase subunit beta</fullName>
    </alternativeName>
    <alternativeName>
        <fullName evidence="1">Transcriptase subunit beta</fullName>
    </alternativeName>
</protein>
<accession>Q8GCR5</accession>
<name>RPOB3_ENTFC</name>
<reference key="1">
    <citation type="submission" date="2002-10" db="EMBL/GenBank/DDBJ databases">
        <title>Rifampin resistance and its fitness cost in Enterococcus faecium.</title>
        <authorList>
            <person name="Enne V.I."/>
            <person name="Bennett P.M."/>
        </authorList>
    </citation>
    <scope>NUCLEOTIDE SEQUENCE [GENOMIC DNA]</scope>
    <source>
        <strain>40-8</strain>
    </source>
</reference>
<sequence>MKSLAGHVVKYGKHRERRSFARISEVLELPNLIEIQTDSYQWFLDEGLGEMFEDILPIDDFNGNLSLEFVDYELKEPKYTVAEARAHDANYSAPLHVTLRLTNRETGEIKAQEVFFGDFPLMTEQGTFIINGAERVIVSQLVRSPGVYFHGKVDKNGKEGFGSTVIPNRGAWLEMETSAKDISYVRIDRTRKIPLTVLVRALGFGSDDTIFEIFGDSETLRNTVEKDLHKNASDSRTEEGLKDVYERLRPGEPKTADSSRNLLNARFFDPKRYDLANVGRYKVNKKLDLKTRLLNLTLAETLVDPETGEIIVEKGTVLTHQVMETLAPFIDNGLNSVTYYPSEDGVVTDPMTVQVIKVFSPKDPEREVNVIGNGYPESAVKTVRPADIIASMSYFLNLMEGIGNVDDIDHLGNRRIRSVGELLQNQFRIGLARMERVVRERMSIQDTETLTPQQLINIRPVVASIKEFFGSSQLSQFMDQTNPLGELTHKRRLSALGPGGLTRDRAGYEVRDVHYSHYGRMCPIETPEGPNIGLINSLSSYAKVNKFGFIETPYRRVDRETGRVTDQIDYLTADIEDHYIVAQANSPLNEDGTFAQDVVMARAQSENLEVSIDKVDYMDVSPKQVVAVATACIPFLENDDSNRALMGANMQRQAVPLINPQAPWVGTGMEYKSAHDSGAALLCKHDGVVEFVDASEIRVRRDNGALDKYAVTKFRRSNSGTSYNQRPIVHLGEKVEKGDTLADGPSMEQGEMALGQNVLVGFMTWEGYNYEDAIIMSRRLVKDDVYTSIHIEEYESEARDTKLGPEEITREIPNVGEDALKDLDEMGIIRIGAEVQDGDLLVGKVTPKGVTELSAEERLLHAIFGEKAREVRDTSLRVPHGGGGIVHDVKIFTREAGDELSPGVNMLVRVYIVQKRKIHEGDKMAGRHGNKGVVSRIMPEEDMPFLPDGTPIDIMLNPLGVPSRMNIGQVLELHLGMAARQLGIHVATPVFDGASDEDVWETVREAGMASDAKTILYDGRTGEPFDGRVSVGVMYMIKLAHMVDDKLHARSIGPYSLVTQQPLGGKAQFGGQRFGEMEVWALEAYGAAYTLQEILTYKSDDVVGRVKTYEAIVKGEPIPKPGVPESFRVLVKELQSLGLDMRVLDIKDSEIQLRDMDDQDDDLITVNALTKFAEQQTAKELEKKAAEQVEDERQDIIQNFETAEDNLD</sequence>
<keyword id="KW-0240">DNA-directed RNA polymerase</keyword>
<keyword id="KW-0548">Nucleotidyltransferase</keyword>
<keyword id="KW-0804">Transcription</keyword>
<keyword id="KW-0808">Transferase</keyword>
<comment type="function">
    <text evidence="1">DNA-dependent RNA polymerase catalyzes the transcription of DNA into RNA using the four ribonucleoside triphosphates as substrates.</text>
</comment>
<comment type="catalytic activity">
    <reaction evidence="1">
        <text>RNA(n) + a ribonucleoside 5'-triphosphate = RNA(n+1) + diphosphate</text>
        <dbReference type="Rhea" id="RHEA:21248"/>
        <dbReference type="Rhea" id="RHEA-COMP:14527"/>
        <dbReference type="Rhea" id="RHEA-COMP:17342"/>
        <dbReference type="ChEBI" id="CHEBI:33019"/>
        <dbReference type="ChEBI" id="CHEBI:61557"/>
        <dbReference type="ChEBI" id="CHEBI:140395"/>
        <dbReference type="EC" id="2.7.7.6"/>
    </reaction>
</comment>
<comment type="subunit">
    <text evidence="1">The RNAP catalytic core consists of 2 alpha, 1 beta, 1 beta' and 1 omega subunit. When a sigma factor is associated with the core the holoenzyme is formed, which can initiate transcription.</text>
</comment>
<comment type="similarity">
    <text evidence="1">Belongs to the RNA polymerase beta chain family.</text>
</comment>
<evidence type="ECO:0000255" key="1">
    <source>
        <dbReference type="HAMAP-Rule" id="MF_01321"/>
    </source>
</evidence>